<organism>
    <name type="scientific">Mus musculus</name>
    <name type="common">Mouse</name>
    <dbReference type="NCBI Taxonomy" id="10090"/>
    <lineage>
        <taxon>Eukaryota</taxon>
        <taxon>Metazoa</taxon>
        <taxon>Chordata</taxon>
        <taxon>Craniata</taxon>
        <taxon>Vertebrata</taxon>
        <taxon>Euteleostomi</taxon>
        <taxon>Mammalia</taxon>
        <taxon>Eutheria</taxon>
        <taxon>Euarchontoglires</taxon>
        <taxon>Glires</taxon>
        <taxon>Rodentia</taxon>
        <taxon>Myomorpha</taxon>
        <taxon>Muroidea</taxon>
        <taxon>Muridae</taxon>
        <taxon>Murinae</taxon>
        <taxon>Mus</taxon>
        <taxon>Mus</taxon>
    </lineage>
</organism>
<keyword id="KW-0966">Cell projection</keyword>
<keyword id="KW-0969">Cilium</keyword>
<keyword id="KW-0175">Coiled coil</keyword>
<keyword id="KW-0963">Cytoplasm</keyword>
<keyword id="KW-0206">Cytoskeleton</keyword>
<keyword id="KW-0282">Flagellum</keyword>
<keyword id="KW-0433">Leucine-rich repeat</keyword>
<keyword id="KW-1185">Reference proteome</keyword>
<keyword id="KW-0677">Repeat</keyword>
<gene>
    <name type="primary">Drc3</name>
    <name type="synonym">Lrrc48</name>
</gene>
<name>DRC3_MOUSE</name>
<sequence>MSRPYDSMEPKVMDDDMLKAAVGEQGPQEEAGQLAKQEGILFKDVLSLQLDFQNILRIDNLWQFENLKKLQLNNNIIERIEGLTNLIHLVWLDLSFNNIEAIEGLDTLVNLEDLSLSNNRISKVDSLDALVKLQVLSLGNNQISNMMNIIYLRRFPCLRTLSLAGNPVSEAEEYKMFIYAYLSDLVYLDFRRVDEQMREMAKMKHQYSIDELKHREAQLQMKLEEEQAKQEKLEEHKMAFVEHLNGPFLFDSMYSEDVEGNKLSYLPGVRELLEAYKDKFVIICLNIFEYGLNQQEKRKVELDTFNECIQEAILENQDQGKLKVAKFEEKHLLNLNAIREETDLSNIEKKLTECTESIGELFNTLMILEMQLVEQLEETINIFERNITDLVGLFIENVQSLIAQCRDLENHHHEKLLEIAINTLEKILKGEMDEDLPDDVRALFVDKDTIVNAVGASHDIHLLKIDNREDELVTGINSWCAHLVDKIHKDEIMRNRKRVKEINQFVDHMQSELDNLECGDIID</sequence>
<accession>Q9D5E4</accession>
<comment type="function">
    <text evidence="1">Component of the nexin-dynein regulatory complex (N-DRC) a key regulator of ciliary/flagellar motility which maintains the alignment and integrity of the distal axoneme and regulates microtubule sliding in motile axonemes.</text>
</comment>
<comment type="subunit">
    <text evidence="2 4 5">Component of the nexin-dynein regulatory complex (N-DRC). Interacts with DRC1 (By similarity). Interacts with TCTE1/DRC5 (PubMed:28630322). Interacts with DRC7 (PubMed:31961863).</text>
</comment>
<comment type="subcellular location">
    <subcellularLocation>
        <location evidence="2">Cytoplasm</location>
        <location evidence="2">Cytoskeleton</location>
        <location evidence="2">Cilium axoneme</location>
    </subcellularLocation>
    <subcellularLocation>
        <location evidence="2">Cell projection</location>
        <location evidence="2">Cilium</location>
    </subcellularLocation>
    <subcellularLocation>
        <location evidence="1">Cytoplasm</location>
        <location evidence="1">Cytoskeleton</location>
        <location evidence="1">Flagellum axoneme</location>
    </subcellularLocation>
    <subcellularLocation>
        <location evidence="5">Cell projection</location>
        <location evidence="5">Cilium</location>
        <location evidence="5">Flagellum</location>
    </subcellularLocation>
</comment>
<comment type="similarity">
    <text evidence="6">Belongs to the DRC3 family.</text>
</comment>
<protein>
    <recommendedName>
        <fullName>Dynein regulatory complex subunit 3</fullName>
    </recommendedName>
    <alternativeName>
        <fullName>Leucine-rich repeat-containing protein 48</fullName>
    </alternativeName>
</protein>
<reference key="1">
    <citation type="journal article" date="2005" name="Science">
        <title>The transcriptional landscape of the mammalian genome.</title>
        <authorList>
            <person name="Carninci P."/>
            <person name="Kasukawa T."/>
            <person name="Katayama S."/>
            <person name="Gough J."/>
            <person name="Frith M.C."/>
            <person name="Maeda N."/>
            <person name="Oyama R."/>
            <person name="Ravasi T."/>
            <person name="Lenhard B."/>
            <person name="Wells C."/>
            <person name="Kodzius R."/>
            <person name="Shimokawa K."/>
            <person name="Bajic V.B."/>
            <person name="Brenner S.E."/>
            <person name="Batalov S."/>
            <person name="Forrest A.R."/>
            <person name="Zavolan M."/>
            <person name="Davis M.J."/>
            <person name="Wilming L.G."/>
            <person name="Aidinis V."/>
            <person name="Allen J.E."/>
            <person name="Ambesi-Impiombato A."/>
            <person name="Apweiler R."/>
            <person name="Aturaliya R.N."/>
            <person name="Bailey T.L."/>
            <person name="Bansal M."/>
            <person name="Baxter L."/>
            <person name="Beisel K.W."/>
            <person name="Bersano T."/>
            <person name="Bono H."/>
            <person name="Chalk A.M."/>
            <person name="Chiu K.P."/>
            <person name="Choudhary V."/>
            <person name="Christoffels A."/>
            <person name="Clutterbuck D.R."/>
            <person name="Crowe M.L."/>
            <person name="Dalla E."/>
            <person name="Dalrymple B.P."/>
            <person name="de Bono B."/>
            <person name="Della Gatta G."/>
            <person name="di Bernardo D."/>
            <person name="Down T."/>
            <person name="Engstrom P."/>
            <person name="Fagiolini M."/>
            <person name="Faulkner G."/>
            <person name="Fletcher C.F."/>
            <person name="Fukushima T."/>
            <person name="Furuno M."/>
            <person name="Futaki S."/>
            <person name="Gariboldi M."/>
            <person name="Georgii-Hemming P."/>
            <person name="Gingeras T.R."/>
            <person name="Gojobori T."/>
            <person name="Green R.E."/>
            <person name="Gustincich S."/>
            <person name="Harbers M."/>
            <person name="Hayashi Y."/>
            <person name="Hensch T.K."/>
            <person name="Hirokawa N."/>
            <person name="Hill D."/>
            <person name="Huminiecki L."/>
            <person name="Iacono M."/>
            <person name="Ikeo K."/>
            <person name="Iwama A."/>
            <person name="Ishikawa T."/>
            <person name="Jakt M."/>
            <person name="Kanapin A."/>
            <person name="Katoh M."/>
            <person name="Kawasawa Y."/>
            <person name="Kelso J."/>
            <person name="Kitamura H."/>
            <person name="Kitano H."/>
            <person name="Kollias G."/>
            <person name="Krishnan S.P."/>
            <person name="Kruger A."/>
            <person name="Kummerfeld S.K."/>
            <person name="Kurochkin I.V."/>
            <person name="Lareau L.F."/>
            <person name="Lazarevic D."/>
            <person name="Lipovich L."/>
            <person name="Liu J."/>
            <person name="Liuni S."/>
            <person name="McWilliam S."/>
            <person name="Madan Babu M."/>
            <person name="Madera M."/>
            <person name="Marchionni L."/>
            <person name="Matsuda H."/>
            <person name="Matsuzawa S."/>
            <person name="Miki H."/>
            <person name="Mignone F."/>
            <person name="Miyake S."/>
            <person name="Morris K."/>
            <person name="Mottagui-Tabar S."/>
            <person name="Mulder N."/>
            <person name="Nakano N."/>
            <person name="Nakauchi H."/>
            <person name="Ng P."/>
            <person name="Nilsson R."/>
            <person name="Nishiguchi S."/>
            <person name="Nishikawa S."/>
            <person name="Nori F."/>
            <person name="Ohara O."/>
            <person name="Okazaki Y."/>
            <person name="Orlando V."/>
            <person name="Pang K.C."/>
            <person name="Pavan W.J."/>
            <person name="Pavesi G."/>
            <person name="Pesole G."/>
            <person name="Petrovsky N."/>
            <person name="Piazza S."/>
            <person name="Reed J."/>
            <person name="Reid J.F."/>
            <person name="Ring B.Z."/>
            <person name="Ringwald M."/>
            <person name="Rost B."/>
            <person name="Ruan Y."/>
            <person name="Salzberg S.L."/>
            <person name="Sandelin A."/>
            <person name="Schneider C."/>
            <person name="Schoenbach C."/>
            <person name="Sekiguchi K."/>
            <person name="Semple C.A."/>
            <person name="Seno S."/>
            <person name="Sessa L."/>
            <person name="Sheng Y."/>
            <person name="Shibata Y."/>
            <person name="Shimada H."/>
            <person name="Shimada K."/>
            <person name="Silva D."/>
            <person name="Sinclair B."/>
            <person name="Sperling S."/>
            <person name="Stupka E."/>
            <person name="Sugiura K."/>
            <person name="Sultana R."/>
            <person name="Takenaka Y."/>
            <person name="Taki K."/>
            <person name="Tammoja K."/>
            <person name="Tan S.L."/>
            <person name="Tang S."/>
            <person name="Taylor M.S."/>
            <person name="Tegner J."/>
            <person name="Teichmann S.A."/>
            <person name="Ueda H.R."/>
            <person name="van Nimwegen E."/>
            <person name="Verardo R."/>
            <person name="Wei C.L."/>
            <person name="Yagi K."/>
            <person name="Yamanishi H."/>
            <person name="Zabarovsky E."/>
            <person name="Zhu S."/>
            <person name="Zimmer A."/>
            <person name="Hide W."/>
            <person name="Bult C."/>
            <person name="Grimmond S.M."/>
            <person name="Teasdale R.D."/>
            <person name="Liu E.T."/>
            <person name="Brusic V."/>
            <person name="Quackenbush J."/>
            <person name="Wahlestedt C."/>
            <person name="Mattick J.S."/>
            <person name="Hume D.A."/>
            <person name="Kai C."/>
            <person name="Sasaki D."/>
            <person name="Tomaru Y."/>
            <person name="Fukuda S."/>
            <person name="Kanamori-Katayama M."/>
            <person name="Suzuki M."/>
            <person name="Aoki J."/>
            <person name="Arakawa T."/>
            <person name="Iida J."/>
            <person name="Imamura K."/>
            <person name="Itoh M."/>
            <person name="Kato T."/>
            <person name="Kawaji H."/>
            <person name="Kawagashira N."/>
            <person name="Kawashima T."/>
            <person name="Kojima M."/>
            <person name="Kondo S."/>
            <person name="Konno H."/>
            <person name="Nakano K."/>
            <person name="Ninomiya N."/>
            <person name="Nishio T."/>
            <person name="Okada M."/>
            <person name="Plessy C."/>
            <person name="Shibata K."/>
            <person name="Shiraki T."/>
            <person name="Suzuki S."/>
            <person name="Tagami M."/>
            <person name="Waki K."/>
            <person name="Watahiki A."/>
            <person name="Okamura-Oho Y."/>
            <person name="Suzuki H."/>
            <person name="Kawai J."/>
            <person name="Hayashizaki Y."/>
        </authorList>
    </citation>
    <scope>NUCLEOTIDE SEQUENCE [LARGE SCALE MRNA]</scope>
    <source>
        <strain>C57BL/6J</strain>
        <tissue>Testis</tissue>
    </source>
</reference>
<reference key="2">
    <citation type="journal article" date="2009" name="PLoS Biol.">
        <title>Lineage-specific biology revealed by a finished genome assembly of the mouse.</title>
        <authorList>
            <person name="Church D.M."/>
            <person name="Goodstadt L."/>
            <person name="Hillier L.W."/>
            <person name="Zody M.C."/>
            <person name="Goldstein S."/>
            <person name="She X."/>
            <person name="Bult C.J."/>
            <person name="Agarwala R."/>
            <person name="Cherry J.L."/>
            <person name="DiCuccio M."/>
            <person name="Hlavina W."/>
            <person name="Kapustin Y."/>
            <person name="Meric P."/>
            <person name="Maglott D."/>
            <person name="Birtle Z."/>
            <person name="Marques A.C."/>
            <person name="Graves T."/>
            <person name="Zhou S."/>
            <person name="Teague B."/>
            <person name="Potamousis K."/>
            <person name="Churas C."/>
            <person name="Place M."/>
            <person name="Herschleb J."/>
            <person name="Runnheim R."/>
            <person name="Forrest D."/>
            <person name="Amos-Landgraf J."/>
            <person name="Schwartz D.C."/>
            <person name="Cheng Z."/>
            <person name="Lindblad-Toh K."/>
            <person name="Eichler E.E."/>
            <person name="Ponting C.P."/>
        </authorList>
    </citation>
    <scope>NUCLEOTIDE SEQUENCE [LARGE SCALE GENOMIC DNA]</scope>
    <source>
        <strain>C57BL/6J</strain>
    </source>
</reference>
<reference key="3">
    <citation type="journal article" date="2004" name="Genome Res.">
        <title>The status, quality, and expansion of the NIH full-length cDNA project: the Mammalian Gene Collection (MGC).</title>
        <authorList>
            <consortium name="The MGC Project Team"/>
        </authorList>
    </citation>
    <scope>NUCLEOTIDE SEQUENCE [LARGE SCALE MRNA]</scope>
    <source>
        <strain>FVB/N</strain>
        <tissue>Mammary tumor</tissue>
    </source>
</reference>
<reference key="4">
    <citation type="journal article" date="2010" name="Cell">
        <title>A tissue-specific atlas of mouse protein phosphorylation and expression.</title>
        <authorList>
            <person name="Huttlin E.L."/>
            <person name="Jedrychowski M.P."/>
            <person name="Elias J.E."/>
            <person name="Goswami T."/>
            <person name="Rad R."/>
            <person name="Beausoleil S.A."/>
            <person name="Villen J."/>
            <person name="Haas W."/>
            <person name="Sowa M.E."/>
            <person name="Gygi S.P."/>
        </authorList>
    </citation>
    <scope>IDENTIFICATION BY MASS SPECTROMETRY [LARGE SCALE ANALYSIS]</scope>
    <source>
        <tissue>Testis</tissue>
    </source>
</reference>
<reference key="5">
    <citation type="journal article" date="2017" name="Proc. Natl. Acad. Sci. U.S.A.">
        <title>TCTE1 is a conserved component of the dynein regulatory complex and is required for motility and metabolism in mouse spermatozoa.</title>
        <authorList>
            <person name="Castaneda J.M."/>
            <person name="Hua R."/>
            <person name="Miyata H."/>
            <person name="Oji A."/>
            <person name="Guo Y."/>
            <person name="Cheng Y."/>
            <person name="Zhou T."/>
            <person name="Guo X."/>
            <person name="Cui Y."/>
            <person name="Shen B."/>
            <person name="Wang Z."/>
            <person name="Hu Z."/>
            <person name="Zhou Z."/>
            <person name="Sha J."/>
            <person name="Prunskaite-Hyyrylainen R."/>
            <person name="Yu Z."/>
            <person name="Ramirez-Solis R."/>
            <person name="Ikawa M."/>
            <person name="Matzuk M.M."/>
            <person name="Liu M."/>
        </authorList>
    </citation>
    <scope>INTERACTION WITH TCTE1</scope>
</reference>
<reference key="6">
    <citation type="journal article" date="2020" name="PLoS Genet.">
        <title>Nexin-Dynein regulatory complex component DRC7 but not FBXL13 is required for sperm flagellum formation and male fertility in mice.</title>
        <authorList>
            <person name="Morohoshi A."/>
            <person name="Miyata H."/>
            <person name="Shimada K."/>
            <person name="Nozawa K."/>
            <person name="Matsumura T."/>
            <person name="Yanase R."/>
            <person name="Shiba K."/>
            <person name="Inaba K."/>
            <person name="Ikawa M."/>
        </authorList>
    </citation>
    <scope>SUBCELLULAR LOCATION</scope>
    <scope>INTERACTION WITH DRC7</scope>
</reference>
<feature type="chain" id="PRO_0000227776" description="Dynein regulatory complex subunit 3">
    <location>
        <begin position="1"/>
        <end position="523"/>
    </location>
</feature>
<feature type="repeat" description="LRR 1">
    <location>
        <begin position="44"/>
        <end position="65"/>
    </location>
</feature>
<feature type="repeat" description="LRR 2">
    <location>
        <begin position="66"/>
        <end position="87"/>
    </location>
</feature>
<feature type="repeat" description="LRR 3">
    <location>
        <begin position="88"/>
        <end position="109"/>
    </location>
</feature>
<feature type="repeat" description="LRR 4">
    <location>
        <begin position="110"/>
        <end position="131"/>
    </location>
</feature>
<feature type="repeat" description="LRR 5">
    <location>
        <begin position="132"/>
        <end position="153"/>
    </location>
</feature>
<feature type="domain" description="LRRCT">
    <location>
        <begin position="166"/>
        <end position="204"/>
    </location>
</feature>
<feature type="coiled-coil region" evidence="3">
    <location>
        <begin position="204"/>
        <end position="242"/>
    </location>
</feature>
<feature type="coiled-coil region" evidence="3">
    <location>
        <begin position="333"/>
        <end position="393"/>
    </location>
</feature>
<evidence type="ECO:0000250" key="1">
    <source>
        <dbReference type="UniProtKB" id="A8IVX2"/>
    </source>
</evidence>
<evidence type="ECO:0000250" key="2">
    <source>
        <dbReference type="UniProtKB" id="Q9H069"/>
    </source>
</evidence>
<evidence type="ECO:0000255" key="3"/>
<evidence type="ECO:0000269" key="4">
    <source>
    </source>
</evidence>
<evidence type="ECO:0000269" key="5">
    <source>
    </source>
</evidence>
<evidence type="ECO:0000305" key="6"/>
<proteinExistence type="evidence at protein level"/>
<dbReference type="EMBL" id="AK015430">
    <property type="protein sequence ID" value="BAB29842.1"/>
    <property type="molecule type" value="mRNA"/>
</dbReference>
<dbReference type="EMBL" id="AL596090">
    <property type="status" value="NOT_ANNOTATED_CDS"/>
    <property type="molecule type" value="Genomic_DNA"/>
</dbReference>
<dbReference type="EMBL" id="BC018412">
    <property type="protein sequence ID" value="AAH18412.1"/>
    <property type="molecule type" value="mRNA"/>
</dbReference>
<dbReference type="CCDS" id="CCDS36172.1"/>
<dbReference type="RefSeq" id="NP_083320.1">
    <property type="nucleotide sequence ID" value="NM_029044.2"/>
</dbReference>
<dbReference type="RefSeq" id="XP_036012946.1">
    <property type="nucleotide sequence ID" value="XM_036157053.1"/>
</dbReference>
<dbReference type="SMR" id="Q9D5E4"/>
<dbReference type="BioGRID" id="216923">
    <property type="interactions" value="1"/>
</dbReference>
<dbReference type="FunCoup" id="Q9D5E4">
    <property type="interactions" value="162"/>
</dbReference>
<dbReference type="STRING" id="10090.ENSMUSP00000104363"/>
<dbReference type="PhosphoSitePlus" id="Q9D5E4"/>
<dbReference type="PaxDb" id="10090-ENSMUSP00000104363"/>
<dbReference type="ProteomicsDB" id="279574"/>
<dbReference type="Antibodypedia" id="25546">
    <property type="antibodies" value="28 antibodies from 11 providers"/>
</dbReference>
<dbReference type="DNASU" id="74665"/>
<dbReference type="Ensembl" id="ENSMUST00000108723.9">
    <property type="protein sequence ID" value="ENSMUSP00000104363.3"/>
    <property type="gene ID" value="ENSMUSG00000056598.18"/>
</dbReference>
<dbReference type="GeneID" id="74665"/>
<dbReference type="KEGG" id="mmu:74665"/>
<dbReference type="UCSC" id="uc007jfu.1">
    <property type="organism name" value="mouse"/>
</dbReference>
<dbReference type="AGR" id="MGI:1921915"/>
<dbReference type="CTD" id="83450"/>
<dbReference type="MGI" id="MGI:1921915">
    <property type="gene designation" value="Drc3"/>
</dbReference>
<dbReference type="VEuPathDB" id="HostDB:ENSMUSG00000056598"/>
<dbReference type="eggNOG" id="KOG0531">
    <property type="taxonomic scope" value="Eukaryota"/>
</dbReference>
<dbReference type="GeneTree" id="ENSGT00940000159298"/>
<dbReference type="InParanoid" id="Q9D5E4"/>
<dbReference type="OMA" id="SFMEMMT"/>
<dbReference type="OrthoDB" id="27917at2759"/>
<dbReference type="PhylomeDB" id="Q9D5E4"/>
<dbReference type="TreeFam" id="TF323974"/>
<dbReference type="BioGRID-ORCS" id="74665">
    <property type="hits" value="1 hit in 78 CRISPR screens"/>
</dbReference>
<dbReference type="ChiTaRS" id="Drc3">
    <property type="organism name" value="mouse"/>
</dbReference>
<dbReference type="PRO" id="PR:Q9D5E4"/>
<dbReference type="Proteomes" id="UP000000589">
    <property type="component" value="Chromosome 11"/>
</dbReference>
<dbReference type="RNAct" id="Q9D5E4">
    <property type="molecule type" value="protein"/>
</dbReference>
<dbReference type="Bgee" id="ENSMUSG00000056598">
    <property type="expression patterns" value="Expressed in spermatocyte and 142 other cell types or tissues"/>
</dbReference>
<dbReference type="ExpressionAtlas" id="Q9D5E4">
    <property type="expression patterns" value="baseline and differential"/>
</dbReference>
<dbReference type="GO" id="GO:0005930">
    <property type="term" value="C:axoneme"/>
    <property type="evidence" value="ECO:0000266"/>
    <property type="project" value="MGI"/>
</dbReference>
<dbReference type="GO" id="GO:0036126">
    <property type="term" value="C:sperm flagellum"/>
    <property type="evidence" value="ECO:0000314"/>
    <property type="project" value="UniProtKB"/>
</dbReference>
<dbReference type="FunFam" id="3.80.10.10:FF:000292">
    <property type="entry name" value="Dynein regulatory complex subunit 3"/>
    <property type="match status" value="1"/>
</dbReference>
<dbReference type="Gene3D" id="3.80.10.10">
    <property type="entry name" value="Ribonuclease Inhibitor"/>
    <property type="match status" value="1"/>
</dbReference>
<dbReference type="InterPro" id="IPR050576">
    <property type="entry name" value="Cilia_flagella_integrity"/>
</dbReference>
<dbReference type="InterPro" id="IPR001611">
    <property type="entry name" value="Leu-rich_rpt"/>
</dbReference>
<dbReference type="InterPro" id="IPR003591">
    <property type="entry name" value="Leu-rich_rpt_typical-subtyp"/>
</dbReference>
<dbReference type="InterPro" id="IPR032675">
    <property type="entry name" value="LRR_dom_sf"/>
</dbReference>
<dbReference type="PANTHER" id="PTHR45973:SF12">
    <property type="entry name" value="DYNEIN REGULATORY COMPLEX SUBUNIT 3"/>
    <property type="match status" value="1"/>
</dbReference>
<dbReference type="PANTHER" id="PTHR45973">
    <property type="entry name" value="PROTEIN PHOSPHATASE 1 REGULATORY SUBUNIT SDS22-RELATED"/>
    <property type="match status" value="1"/>
</dbReference>
<dbReference type="Pfam" id="PF14580">
    <property type="entry name" value="LRR_9"/>
    <property type="match status" value="1"/>
</dbReference>
<dbReference type="SMART" id="SM00365">
    <property type="entry name" value="LRR_SD22"/>
    <property type="match status" value="4"/>
</dbReference>
<dbReference type="SMART" id="SM00369">
    <property type="entry name" value="LRR_TYP"/>
    <property type="match status" value="3"/>
</dbReference>
<dbReference type="SUPFAM" id="SSF52058">
    <property type="entry name" value="L domain-like"/>
    <property type="match status" value="1"/>
</dbReference>
<dbReference type="PROSITE" id="PS51450">
    <property type="entry name" value="LRR"/>
    <property type="match status" value="5"/>
</dbReference>